<accession>Q309B1</accession>
<accession>A0PK10</accession>
<accession>B2RUW6</accession>
<accession>B4DQK2</accession>
<accession>B4DWQ8</accession>
<sequence length="348" mass="40306">MQFGELLAAVRKAQANVMLFLEEKEQAALSQANGIKAHLEYRSAEMEKSKQELETMAAISNTVQFLEEYCKFKNTEDITFPSVYIGLKDKLSGIRKVITESTVHLIQLLENYKKKLQEFSKEEEYDIRTQVSAIVQRKYWTSKPEPSTREQFLQYVHDITFDPDTAHKYLRLQEENRKVTNTTPWEHPYPDLPSRFLHWRQVLSQQSLYLHRYYFEVEIFGAGTYVGLTCKGIDQKGEERSSCISGNNFSWSLQWNGKEFTAWYSDMETPLKAGPFWRLGVYIDFPGGILSFYGVEYDSMTLVHKFACKFSEPVYAAFWLSKKENAIRIVDLGEEPEKPAPSLVGTAP</sequence>
<feature type="chain" id="PRO_0000279515" description="Tripartite motif-containing protein 16-like protein">
    <location>
        <begin position="1"/>
        <end position="348"/>
    </location>
</feature>
<feature type="domain" description="B30.2/SPRY" evidence="2">
    <location>
        <begin position="139"/>
        <end position="337"/>
    </location>
</feature>
<feature type="splice variant" id="VSP_044369" description="In isoform 2." evidence="3">
    <original>EYCKFKNTEDITFPSVYIGLKDKLSGIRKVITESTVHLIQLLENYKKKLQEFSKEEEYDIRTQVSAIVQRKYW</original>
    <variation>MCMTSRSTRTQHTSISGCRRRTARSPTPRPGSIPTRTSPAGSCTGGRCCPSRVCTCTGTILRWRSSGQAPMLA</variation>
    <location>
        <begin position="68"/>
        <end position="140"/>
    </location>
</feature>
<feature type="splice variant" id="VSP_044370" description="In isoform 2." evidence="3">
    <location>
        <begin position="141"/>
        <end position="348"/>
    </location>
</feature>
<feature type="sequence conflict" description="In Ref. 2; BAG60964 and 4; AAI27828/AAI28592." evidence="4" ref="2 4">
    <original>R</original>
    <variation>K</variation>
    <location>
        <position position="42"/>
    </location>
</feature>
<feature type="helix" evidence="5">
    <location>
        <begin position="148"/>
        <end position="153"/>
    </location>
</feature>
<feature type="turn" evidence="5">
    <location>
        <begin position="163"/>
        <end position="165"/>
    </location>
</feature>
<feature type="strand" evidence="5">
    <location>
        <begin position="170"/>
        <end position="173"/>
    </location>
</feature>
<feature type="turn" evidence="5">
    <location>
        <begin position="174"/>
        <end position="177"/>
    </location>
</feature>
<feature type="strand" evidence="5">
    <location>
        <begin position="178"/>
        <end position="181"/>
    </location>
</feature>
<feature type="strand" evidence="5">
    <location>
        <begin position="197"/>
        <end position="199"/>
    </location>
</feature>
<feature type="strand" evidence="5">
    <location>
        <begin position="201"/>
        <end position="208"/>
    </location>
</feature>
<feature type="strand" evidence="5">
    <location>
        <begin position="210"/>
        <end position="221"/>
    </location>
</feature>
<feature type="strand" evidence="5">
    <location>
        <begin position="224"/>
        <end position="230"/>
    </location>
</feature>
<feature type="helix" evidence="5">
    <location>
        <begin position="240"/>
        <end position="242"/>
    </location>
</feature>
<feature type="strand" evidence="5">
    <location>
        <begin position="251"/>
        <end position="255"/>
    </location>
</feature>
<feature type="strand" evidence="5">
    <location>
        <begin position="260"/>
        <end position="264"/>
    </location>
</feature>
<feature type="strand" evidence="5">
    <location>
        <begin position="267"/>
        <end position="270"/>
    </location>
</feature>
<feature type="strand" evidence="5">
    <location>
        <begin position="277"/>
        <end position="284"/>
    </location>
</feature>
<feature type="turn" evidence="5">
    <location>
        <begin position="285"/>
        <end position="288"/>
    </location>
</feature>
<feature type="strand" evidence="5">
    <location>
        <begin position="289"/>
        <end position="296"/>
    </location>
</feature>
<feature type="strand" evidence="5">
    <location>
        <begin position="299"/>
        <end position="307"/>
    </location>
</feature>
<feature type="strand" evidence="5">
    <location>
        <begin position="314"/>
        <end position="320"/>
    </location>
</feature>
<feature type="strand" evidence="5">
    <location>
        <begin position="326"/>
        <end position="329"/>
    </location>
</feature>
<reference key="1">
    <citation type="submission" date="2005-10" db="EMBL/GenBank/DDBJ databases">
        <title>Characterization of the human TRIM70 gene.</title>
        <authorList>
            <person name="Corcoran M."/>
            <person name="Grander D."/>
            <person name="Sangfelt O."/>
            <person name="Lerner M."/>
        </authorList>
    </citation>
    <scope>NUCLEOTIDE SEQUENCE [MRNA] (ISOFORM 1)</scope>
</reference>
<reference key="2">
    <citation type="journal article" date="2004" name="Nat. Genet.">
        <title>Complete sequencing and characterization of 21,243 full-length human cDNAs.</title>
        <authorList>
            <person name="Ota T."/>
            <person name="Suzuki Y."/>
            <person name="Nishikawa T."/>
            <person name="Otsuki T."/>
            <person name="Sugiyama T."/>
            <person name="Irie R."/>
            <person name="Wakamatsu A."/>
            <person name="Hayashi K."/>
            <person name="Sato H."/>
            <person name="Nagai K."/>
            <person name="Kimura K."/>
            <person name="Makita H."/>
            <person name="Sekine M."/>
            <person name="Obayashi M."/>
            <person name="Nishi T."/>
            <person name="Shibahara T."/>
            <person name="Tanaka T."/>
            <person name="Ishii S."/>
            <person name="Yamamoto J."/>
            <person name="Saito K."/>
            <person name="Kawai Y."/>
            <person name="Isono Y."/>
            <person name="Nakamura Y."/>
            <person name="Nagahari K."/>
            <person name="Murakami K."/>
            <person name="Yasuda T."/>
            <person name="Iwayanagi T."/>
            <person name="Wagatsuma M."/>
            <person name="Shiratori A."/>
            <person name="Sudo H."/>
            <person name="Hosoiri T."/>
            <person name="Kaku Y."/>
            <person name="Kodaira H."/>
            <person name="Kondo H."/>
            <person name="Sugawara M."/>
            <person name="Takahashi M."/>
            <person name="Kanda K."/>
            <person name="Yokoi T."/>
            <person name="Furuya T."/>
            <person name="Kikkawa E."/>
            <person name="Omura Y."/>
            <person name="Abe K."/>
            <person name="Kamihara K."/>
            <person name="Katsuta N."/>
            <person name="Sato K."/>
            <person name="Tanikawa M."/>
            <person name="Yamazaki M."/>
            <person name="Ninomiya K."/>
            <person name="Ishibashi T."/>
            <person name="Yamashita H."/>
            <person name="Murakawa K."/>
            <person name="Fujimori K."/>
            <person name="Tanai H."/>
            <person name="Kimata M."/>
            <person name="Watanabe M."/>
            <person name="Hiraoka S."/>
            <person name="Chiba Y."/>
            <person name="Ishida S."/>
            <person name="Ono Y."/>
            <person name="Takiguchi S."/>
            <person name="Watanabe S."/>
            <person name="Yosida M."/>
            <person name="Hotuta T."/>
            <person name="Kusano J."/>
            <person name="Kanehori K."/>
            <person name="Takahashi-Fujii A."/>
            <person name="Hara H."/>
            <person name="Tanase T.-O."/>
            <person name="Nomura Y."/>
            <person name="Togiya S."/>
            <person name="Komai F."/>
            <person name="Hara R."/>
            <person name="Takeuchi K."/>
            <person name="Arita M."/>
            <person name="Imose N."/>
            <person name="Musashino K."/>
            <person name="Yuuki H."/>
            <person name="Oshima A."/>
            <person name="Sasaki N."/>
            <person name="Aotsuka S."/>
            <person name="Yoshikawa Y."/>
            <person name="Matsunawa H."/>
            <person name="Ichihara T."/>
            <person name="Shiohata N."/>
            <person name="Sano S."/>
            <person name="Moriya S."/>
            <person name="Momiyama H."/>
            <person name="Satoh N."/>
            <person name="Takami S."/>
            <person name="Terashima Y."/>
            <person name="Suzuki O."/>
            <person name="Nakagawa S."/>
            <person name="Senoh A."/>
            <person name="Mizoguchi H."/>
            <person name="Goto Y."/>
            <person name="Shimizu F."/>
            <person name="Wakebe H."/>
            <person name="Hishigaki H."/>
            <person name="Watanabe T."/>
            <person name="Sugiyama A."/>
            <person name="Takemoto M."/>
            <person name="Kawakami B."/>
            <person name="Yamazaki M."/>
            <person name="Watanabe K."/>
            <person name="Kumagai A."/>
            <person name="Itakura S."/>
            <person name="Fukuzumi Y."/>
            <person name="Fujimori Y."/>
            <person name="Komiyama M."/>
            <person name="Tashiro H."/>
            <person name="Tanigami A."/>
            <person name="Fujiwara T."/>
            <person name="Ono T."/>
            <person name="Yamada K."/>
            <person name="Fujii Y."/>
            <person name="Ozaki K."/>
            <person name="Hirao M."/>
            <person name="Ohmori Y."/>
            <person name="Kawabata A."/>
            <person name="Hikiji T."/>
            <person name="Kobatake N."/>
            <person name="Inagaki H."/>
            <person name="Ikema Y."/>
            <person name="Okamoto S."/>
            <person name="Okitani R."/>
            <person name="Kawakami T."/>
            <person name="Noguchi S."/>
            <person name="Itoh T."/>
            <person name="Shigeta K."/>
            <person name="Senba T."/>
            <person name="Matsumura K."/>
            <person name="Nakajima Y."/>
            <person name="Mizuno T."/>
            <person name="Morinaga M."/>
            <person name="Sasaki M."/>
            <person name="Togashi T."/>
            <person name="Oyama M."/>
            <person name="Hata H."/>
            <person name="Watanabe M."/>
            <person name="Komatsu T."/>
            <person name="Mizushima-Sugano J."/>
            <person name="Satoh T."/>
            <person name="Shirai Y."/>
            <person name="Takahashi Y."/>
            <person name="Nakagawa K."/>
            <person name="Okumura K."/>
            <person name="Nagase T."/>
            <person name="Nomura N."/>
            <person name="Kikuchi H."/>
            <person name="Masuho Y."/>
            <person name="Yamashita R."/>
            <person name="Nakai K."/>
            <person name="Yada T."/>
            <person name="Nakamura Y."/>
            <person name="Ohara O."/>
            <person name="Isogai T."/>
            <person name="Sugano S."/>
        </authorList>
    </citation>
    <scope>NUCLEOTIDE SEQUENCE [LARGE SCALE MRNA] (ISOFORMS 1 AND 2)</scope>
    <source>
        <tissue>Esophagus</tissue>
    </source>
</reference>
<reference key="3">
    <citation type="journal article" date="2006" name="Nature">
        <title>DNA sequence of human chromosome 17 and analysis of rearrangement in the human lineage.</title>
        <authorList>
            <person name="Zody M.C."/>
            <person name="Garber M."/>
            <person name="Adams D.J."/>
            <person name="Sharpe T."/>
            <person name="Harrow J."/>
            <person name="Lupski J.R."/>
            <person name="Nicholson C."/>
            <person name="Searle S.M."/>
            <person name="Wilming L."/>
            <person name="Young S.K."/>
            <person name="Abouelleil A."/>
            <person name="Allen N.R."/>
            <person name="Bi W."/>
            <person name="Bloom T."/>
            <person name="Borowsky M.L."/>
            <person name="Bugalter B.E."/>
            <person name="Butler J."/>
            <person name="Chang J.L."/>
            <person name="Chen C.-K."/>
            <person name="Cook A."/>
            <person name="Corum B."/>
            <person name="Cuomo C.A."/>
            <person name="de Jong P.J."/>
            <person name="DeCaprio D."/>
            <person name="Dewar K."/>
            <person name="FitzGerald M."/>
            <person name="Gilbert J."/>
            <person name="Gibson R."/>
            <person name="Gnerre S."/>
            <person name="Goldstein S."/>
            <person name="Grafham D.V."/>
            <person name="Grocock R."/>
            <person name="Hafez N."/>
            <person name="Hagopian D.S."/>
            <person name="Hart E."/>
            <person name="Norman C.H."/>
            <person name="Humphray S."/>
            <person name="Jaffe D.B."/>
            <person name="Jones M."/>
            <person name="Kamal M."/>
            <person name="Khodiyar V.K."/>
            <person name="LaButti K."/>
            <person name="Laird G."/>
            <person name="Lehoczky J."/>
            <person name="Liu X."/>
            <person name="Lokyitsang T."/>
            <person name="Loveland J."/>
            <person name="Lui A."/>
            <person name="Macdonald P."/>
            <person name="Major J.E."/>
            <person name="Matthews L."/>
            <person name="Mauceli E."/>
            <person name="McCarroll S.A."/>
            <person name="Mihalev A.H."/>
            <person name="Mudge J."/>
            <person name="Nguyen C."/>
            <person name="Nicol R."/>
            <person name="O'Leary S.B."/>
            <person name="Osoegawa K."/>
            <person name="Schwartz D.C."/>
            <person name="Shaw-Smith C."/>
            <person name="Stankiewicz P."/>
            <person name="Steward C."/>
            <person name="Swarbreck D."/>
            <person name="Venkataraman V."/>
            <person name="Whittaker C.A."/>
            <person name="Yang X."/>
            <person name="Zimmer A.R."/>
            <person name="Bradley A."/>
            <person name="Hubbard T."/>
            <person name="Birren B.W."/>
            <person name="Rogers J."/>
            <person name="Lander E.S."/>
            <person name="Nusbaum C."/>
        </authorList>
    </citation>
    <scope>NUCLEOTIDE SEQUENCE [LARGE SCALE GENOMIC DNA]</scope>
</reference>
<reference key="4">
    <citation type="journal article" date="2004" name="Genome Res.">
        <title>The status, quality, and expansion of the NIH full-length cDNA project: the Mammalian Gene Collection (MGC).</title>
        <authorList>
            <consortium name="The MGC Project Team"/>
        </authorList>
    </citation>
    <scope>NUCLEOTIDE SEQUENCE [LARGE SCALE MRNA] (ISOFORM 1)</scope>
    <source>
        <tissue>Brain</tissue>
    </source>
</reference>
<dbReference type="EMBL" id="DQ232882">
    <property type="protein sequence ID" value="ABB18375.1"/>
    <property type="molecule type" value="mRNA"/>
</dbReference>
<dbReference type="EMBL" id="AK298836">
    <property type="protein sequence ID" value="BAG60964.1"/>
    <property type="molecule type" value="mRNA"/>
</dbReference>
<dbReference type="EMBL" id="AK301639">
    <property type="protein sequence ID" value="BAG63120.1"/>
    <property type="molecule type" value="mRNA"/>
</dbReference>
<dbReference type="EMBL" id="AK301647">
    <property type="protein sequence ID" value="BAH13530.1"/>
    <property type="molecule type" value="mRNA"/>
</dbReference>
<dbReference type="EMBL" id="AK316368">
    <property type="protein sequence ID" value="BAH14739.1"/>
    <property type="molecule type" value="mRNA"/>
</dbReference>
<dbReference type="EMBL" id="AC026271">
    <property type="status" value="NOT_ANNOTATED_CDS"/>
    <property type="molecule type" value="Genomic_DNA"/>
</dbReference>
<dbReference type="EMBL" id="AC107982">
    <property type="status" value="NOT_ANNOTATED_CDS"/>
    <property type="molecule type" value="Genomic_DNA"/>
</dbReference>
<dbReference type="EMBL" id="BC127827">
    <property type="protein sequence ID" value="AAI27828.1"/>
    <property type="molecule type" value="mRNA"/>
</dbReference>
<dbReference type="EMBL" id="BC128591">
    <property type="protein sequence ID" value="AAI28592.1"/>
    <property type="molecule type" value="mRNA"/>
</dbReference>
<dbReference type="EMBL" id="BC146907">
    <property type="protein sequence ID" value="AAI46908.1"/>
    <property type="molecule type" value="mRNA"/>
</dbReference>
<dbReference type="EMBL" id="BC146902">
    <property type="protein sequence ID" value="AAI46903.1"/>
    <property type="molecule type" value="mRNA"/>
</dbReference>
<dbReference type="RefSeq" id="NP_001032407.1">
    <property type="nucleotide sequence ID" value="NM_001037330.1"/>
</dbReference>
<dbReference type="RefSeq" id="XP_005256538.1">
    <property type="nucleotide sequence ID" value="XM_005256481.4"/>
</dbReference>
<dbReference type="RefSeq" id="XP_005256540.1">
    <property type="nucleotide sequence ID" value="XM_005256483.4"/>
</dbReference>
<dbReference type="RefSeq" id="XP_011521992.1">
    <property type="nucleotide sequence ID" value="XM_011523690.2"/>
</dbReference>
<dbReference type="RefSeq" id="XP_016879734.1">
    <property type="nucleotide sequence ID" value="XM_017024245.1"/>
</dbReference>
<dbReference type="RefSeq" id="XP_016879735.1">
    <property type="nucleotide sequence ID" value="XM_017024246.1"/>
</dbReference>
<dbReference type="RefSeq" id="XP_016879736.1">
    <property type="nucleotide sequence ID" value="XM_017024247.1"/>
</dbReference>
<dbReference type="RefSeq" id="XP_016879737.1">
    <property type="nucleotide sequence ID" value="XM_017024248.1"/>
</dbReference>
<dbReference type="RefSeq" id="XP_016879738.1">
    <property type="nucleotide sequence ID" value="XM_017024249.1"/>
</dbReference>
<dbReference type="RefSeq" id="XP_016879739.1">
    <property type="nucleotide sequence ID" value="XM_017024250.1"/>
</dbReference>
<dbReference type="RefSeq" id="XP_016879740.1">
    <property type="nucleotide sequence ID" value="XM_017024251.1"/>
</dbReference>
<dbReference type="RefSeq" id="XP_016879741.1">
    <property type="nucleotide sequence ID" value="XM_017024252.1"/>
</dbReference>
<dbReference type="PDB" id="6SJH">
    <property type="method" value="X-ray"/>
    <property type="resolution" value="1.50 A"/>
    <property type="chains" value="A/B/C=147-332"/>
</dbReference>
<dbReference type="PDBsum" id="6SJH"/>
<dbReference type="SMR" id="Q309B1"/>
<dbReference type="BioGRID" id="127041">
    <property type="interactions" value="14"/>
</dbReference>
<dbReference type="FunCoup" id="Q309B1">
    <property type="interactions" value="14"/>
</dbReference>
<dbReference type="IntAct" id="Q309B1">
    <property type="interactions" value="13"/>
</dbReference>
<dbReference type="MINT" id="Q309B1"/>
<dbReference type="STRING" id="9606.ENSP00000379030"/>
<dbReference type="iPTMnet" id="Q309B1"/>
<dbReference type="PhosphoSitePlus" id="Q309B1"/>
<dbReference type="BioMuta" id="TRIM16L"/>
<dbReference type="DMDM" id="296453011"/>
<dbReference type="jPOST" id="Q309B1"/>
<dbReference type="MassIVE" id="Q309B1"/>
<dbReference type="PaxDb" id="9606-ENSP00000461386"/>
<dbReference type="PeptideAtlas" id="Q309B1"/>
<dbReference type="ProteomicsDB" id="5371"/>
<dbReference type="ProteomicsDB" id="61570">
    <molecule id="Q309B1-1"/>
</dbReference>
<dbReference type="Pumba" id="Q309B1"/>
<dbReference type="DNASU" id="147166"/>
<dbReference type="UCSC" id="uc002gug.2">
    <molecule id="Q309B1-1"/>
    <property type="organism name" value="human"/>
</dbReference>
<dbReference type="AGR" id="HGNC:32670"/>
<dbReference type="DisGeNET" id="147166"/>
<dbReference type="GeneCards" id="TRIM16L"/>
<dbReference type="HGNC" id="HGNC:32670">
    <property type="gene designation" value="TRIM16L"/>
</dbReference>
<dbReference type="neXtProt" id="NX_Q309B1"/>
<dbReference type="PharmGKB" id="PA144596249"/>
<dbReference type="VEuPathDB" id="HostDB:ENSG00000108448"/>
<dbReference type="eggNOG" id="KOG0274">
    <property type="taxonomic scope" value="Eukaryota"/>
</dbReference>
<dbReference type="HOGENOM" id="CLU_013137_0_2_1"/>
<dbReference type="InParanoid" id="Q309B1"/>
<dbReference type="OMA" id="IGLYVDF"/>
<dbReference type="PAN-GO" id="Q309B1">
    <property type="GO annotations" value="0 GO annotations based on evolutionary models"/>
</dbReference>
<dbReference type="PhylomeDB" id="Q309B1"/>
<dbReference type="TreeFam" id="TF332213"/>
<dbReference type="PathwayCommons" id="Q309B1"/>
<dbReference type="SignaLink" id="Q309B1"/>
<dbReference type="BioGRID-ORCS" id="147166">
    <property type="hits" value="8 hits in 1057 CRISPR screens"/>
</dbReference>
<dbReference type="ChiTaRS" id="TRIM16L">
    <property type="organism name" value="human"/>
</dbReference>
<dbReference type="GenomeRNAi" id="147166"/>
<dbReference type="Pharos" id="Q309B1">
    <property type="development level" value="Tdark"/>
</dbReference>
<dbReference type="PRO" id="PR:Q309B1"/>
<dbReference type="Proteomes" id="UP000005640">
    <property type="component" value="Chromosome 17"/>
</dbReference>
<dbReference type="RNAct" id="Q309B1">
    <property type="molecule type" value="protein"/>
</dbReference>
<dbReference type="GO" id="GO:0005737">
    <property type="term" value="C:cytoplasm"/>
    <property type="evidence" value="ECO:0007669"/>
    <property type="project" value="UniProtKB-SubCell"/>
</dbReference>
<dbReference type="CDD" id="cd12890">
    <property type="entry name" value="SPRY_PRY_TRIM16"/>
    <property type="match status" value="1"/>
</dbReference>
<dbReference type="FunFam" id="2.60.120.920:FF:000046">
    <property type="entry name" value="tripartite motif-containing protein 16"/>
    <property type="match status" value="1"/>
</dbReference>
<dbReference type="Gene3D" id="2.60.120.920">
    <property type="match status" value="1"/>
</dbReference>
<dbReference type="InterPro" id="IPR001870">
    <property type="entry name" value="B30.2/SPRY"/>
</dbReference>
<dbReference type="InterPro" id="IPR043136">
    <property type="entry name" value="B30.2/SPRY_sf"/>
</dbReference>
<dbReference type="InterPro" id="IPR003879">
    <property type="entry name" value="Butyrophylin_SPRY"/>
</dbReference>
<dbReference type="InterPro" id="IPR013320">
    <property type="entry name" value="ConA-like_dom_sf"/>
</dbReference>
<dbReference type="InterPro" id="IPR006574">
    <property type="entry name" value="PRY"/>
</dbReference>
<dbReference type="InterPro" id="IPR051075">
    <property type="entry name" value="SCF_subunit_WD-repeat"/>
</dbReference>
<dbReference type="InterPro" id="IPR003877">
    <property type="entry name" value="SPRY_dom"/>
</dbReference>
<dbReference type="PANTHER" id="PTHR19872:SF7">
    <property type="entry name" value="F-BOX AND WD REPEAT DOMAIN CONTAINING PROTEIN 10B-RELATED"/>
    <property type="match status" value="1"/>
</dbReference>
<dbReference type="PANTHER" id="PTHR19872">
    <property type="entry name" value="UBIQUITIN LIGASE SPECIFICITY FACTOR/HREP PROTEIN"/>
    <property type="match status" value="1"/>
</dbReference>
<dbReference type="Pfam" id="PF13765">
    <property type="entry name" value="PRY"/>
    <property type="match status" value="1"/>
</dbReference>
<dbReference type="Pfam" id="PF00622">
    <property type="entry name" value="SPRY"/>
    <property type="match status" value="1"/>
</dbReference>
<dbReference type="PRINTS" id="PR01407">
    <property type="entry name" value="BUTYPHLNCDUF"/>
</dbReference>
<dbReference type="SMART" id="SM00589">
    <property type="entry name" value="PRY"/>
    <property type="match status" value="1"/>
</dbReference>
<dbReference type="SMART" id="SM00449">
    <property type="entry name" value="SPRY"/>
    <property type="match status" value="1"/>
</dbReference>
<dbReference type="SUPFAM" id="SSF49899">
    <property type="entry name" value="Concanavalin A-like lectins/glucanases"/>
    <property type="match status" value="1"/>
</dbReference>
<dbReference type="PROSITE" id="PS50188">
    <property type="entry name" value="B302_SPRY"/>
    <property type="match status" value="1"/>
</dbReference>
<name>TR16L_HUMAN</name>
<organism>
    <name type="scientific">Homo sapiens</name>
    <name type="common">Human</name>
    <dbReference type="NCBI Taxonomy" id="9606"/>
    <lineage>
        <taxon>Eukaryota</taxon>
        <taxon>Metazoa</taxon>
        <taxon>Chordata</taxon>
        <taxon>Craniata</taxon>
        <taxon>Vertebrata</taxon>
        <taxon>Euteleostomi</taxon>
        <taxon>Mammalia</taxon>
        <taxon>Eutheria</taxon>
        <taxon>Euarchontoglires</taxon>
        <taxon>Primates</taxon>
        <taxon>Haplorrhini</taxon>
        <taxon>Catarrhini</taxon>
        <taxon>Hominidae</taxon>
        <taxon>Homo</taxon>
    </lineage>
</organism>
<protein>
    <recommendedName>
        <fullName>Tripartite motif-containing protein 16-like protein</fullName>
    </recommendedName>
    <alternativeName>
        <fullName>Tripartite motif-containing protein 70</fullName>
    </alternativeName>
</protein>
<comment type="interaction">
    <interactant intactId="EBI-21372540">
        <id>Q309B1</id>
    </interactant>
    <interactant intactId="EBI-1171999">
        <id>Q9BWM7</id>
        <label>SFXN3</label>
    </interactant>
    <organismsDiffer>false</organismsDiffer>
    <experiments>3</experiments>
</comment>
<comment type="interaction">
    <interactant intactId="EBI-21372540">
        <id>Q309B1</id>
    </interactant>
    <interactant intactId="EBI-727384">
        <id>O95361</id>
        <label>TRIM16</label>
    </interactant>
    <organismsDiffer>false</organismsDiffer>
    <experiments>3</experiments>
</comment>
<comment type="subcellular location">
    <subcellularLocation>
        <location evidence="1">Cytoplasm</location>
    </subcellularLocation>
</comment>
<comment type="alternative products">
    <event type="alternative splicing"/>
    <isoform>
        <id>Q309B1-1</id>
        <name>1</name>
        <sequence type="displayed"/>
    </isoform>
    <isoform>
        <id>Q309B1-2</id>
        <name>2</name>
        <sequence type="described" ref="VSP_044369 VSP_044370"/>
    </isoform>
</comment>
<comment type="similarity">
    <text evidence="4">Belongs to the TRIM/RBCC family.</text>
</comment>
<evidence type="ECO:0000250" key="1"/>
<evidence type="ECO:0000255" key="2">
    <source>
        <dbReference type="PROSITE-ProRule" id="PRU00548"/>
    </source>
</evidence>
<evidence type="ECO:0000303" key="3">
    <source>
    </source>
</evidence>
<evidence type="ECO:0000305" key="4"/>
<evidence type="ECO:0007829" key="5">
    <source>
        <dbReference type="PDB" id="6SJH"/>
    </source>
</evidence>
<keyword id="KW-0002">3D-structure</keyword>
<keyword id="KW-0025">Alternative splicing</keyword>
<keyword id="KW-0963">Cytoplasm</keyword>
<keyword id="KW-1267">Proteomics identification</keyword>
<keyword id="KW-1185">Reference proteome</keyword>
<gene>
    <name type="primary">TRIM16L</name>
    <name type="synonym">TRIM70</name>
</gene>
<proteinExistence type="evidence at protein level"/>